<dbReference type="EC" id="7.1.1.-" evidence="1"/>
<dbReference type="EMBL" id="CP001029">
    <property type="protein sequence ID" value="ACB79193.1"/>
    <property type="molecule type" value="Genomic_DNA"/>
</dbReference>
<dbReference type="RefSeq" id="WP_012452944.1">
    <property type="nucleotide sequence ID" value="NC_010725.1"/>
</dbReference>
<dbReference type="SMR" id="B1ZA44"/>
<dbReference type="STRING" id="441620.Mpop_1017"/>
<dbReference type="KEGG" id="mpo:Mpop_1017"/>
<dbReference type="eggNOG" id="COG0852">
    <property type="taxonomic scope" value="Bacteria"/>
</dbReference>
<dbReference type="HOGENOM" id="CLU_042628_2_1_5"/>
<dbReference type="OrthoDB" id="9803286at2"/>
<dbReference type="Proteomes" id="UP000007136">
    <property type="component" value="Chromosome"/>
</dbReference>
<dbReference type="GO" id="GO:0005886">
    <property type="term" value="C:plasma membrane"/>
    <property type="evidence" value="ECO:0007669"/>
    <property type="project" value="UniProtKB-SubCell"/>
</dbReference>
<dbReference type="GO" id="GO:0008137">
    <property type="term" value="F:NADH dehydrogenase (ubiquinone) activity"/>
    <property type="evidence" value="ECO:0007669"/>
    <property type="project" value="InterPro"/>
</dbReference>
<dbReference type="GO" id="GO:0050136">
    <property type="term" value="F:NADH:ubiquinone reductase (non-electrogenic) activity"/>
    <property type="evidence" value="ECO:0007669"/>
    <property type="project" value="UniProtKB-UniRule"/>
</dbReference>
<dbReference type="GO" id="GO:0048038">
    <property type="term" value="F:quinone binding"/>
    <property type="evidence" value="ECO:0007669"/>
    <property type="project" value="UniProtKB-KW"/>
</dbReference>
<dbReference type="Gene3D" id="3.30.460.80">
    <property type="entry name" value="NADH:ubiquinone oxidoreductase, 30kDa subunit"/>
    <property type="match status" value="1"/>
</dbReference>
<dbReference type="HAMAP" id="MF_01357">
    <property type="entry name" value="NDH1_NuoC"/>
    <property type="match status" value="1"/>
</dbReference>
<dbReference type="InterPro" id="IPR010218">
    <property type="entry name" value="NADH_DH_suC"/>
</dbReference>
<dbReference type="InterPro" id="IPR037232">
    <property type="entry name" value="NADH_quin_OxRdtase_su_C/D-like"/>
</dbReference>
<dbReference type="InterPro" id="IPR001268">
    <property type="entry name" value="NADH_UbQ_OxRdtase_30kDa_su"/>
</dbReference>
<dbReference type="InterPro" id="IPR020396">
    <property type="entry name" value="NADH_UbQ_OxRdtase_CS"/>
</dbReference>
<dbReference type="NCBIfam" id="TIGR01961">
    <property type="entry name" value="NuoC_fam"/>
    <property type="match status" value="1"/>
</dbReference>
<dbReference type="NCBIfam" id="NF004730">
    <property type="entry name" value="PRK06074.1-1"/>
    <property type="match status" value="1"/>
</dbReference>
<dbReference type="NCBIfam" id="NF004733">
    <property type="entry name" value="PRK06074.1-5"/>
    <property type="match status" value="1"/>
</dbReference>
<dbReference type="PANTHER" id="PTHR10884:SF14">
    <property type="entry name" value="NADH DEHYDROGENASE [UBIQUINONE] IRON-SULFUR PROTEIN 3, MITOCHONDRIAL"/>
    <property type="match status" value="1"/>
</dbReference>
<dbReference type="PANTHER" id="PTHR10884">
    <property type="entry name" value="NADH DEHYDROGENASE UBIQUINONE IRON-SULFUR PROTEIN 3"/>
    <property type="match status" value="1"/>
</dbReference>
<dbReference type="Pfam" id="PF00329">
    <property type="entry name" value="Complex1_30kDa"/>
    <property type="match status" value="1"/>
</dbReference>
<dbReference type="SUPFAM" id="SSF143243">
    <property type="entry name" value="Nqo5-like"/>
    <property type="match status" value="1"/>
</dbReference>
<dbReference type="PROSITE" id="PS00542">
    <property type="entry name" value="COMPLEX1_30K"/>
    <property type="match status" value="1"/>
</dbReference>
<comment type="function">
    <text evidence="1">NDH-1 shuttles electrons from NADH, via FMN and iron-sulfur (Fe-S) centers, to quinones in the respiratory chain. The immediate electron acceptor for the enzyme in this species is believed to be ubiquinone. Couples the redox reaction to proton translocation (for every two electrons transferred, four hydrogen ions are translocated across the cytoplasmic membrane), and thus conserves the redox energy in a proton gradient.</text>
</comment>
<comment type="catalytic activity">
    <reaction evidence="1">
        <text>a quinone + NADH + 5 H(+)(in) = a quinol + NAD(+) + 4 H(+)(out)</text>
        <dbReference type="Rhea" id="RHEA:57888"/>
        <dbReference type="ChEBI" id="CHEBI:15378"/>
        <dbReference type="ChEBI" id="CHEBI:24646"/>
        <dbReference type="ChEBI" id="CHEBI:57540"/>
        <dbReference type="ChEBI" id="CHEBI:57945"/>
        <dbReference type="ChEBI" id="CHEBI:132124"/>
    </reaction>
</comment>
<comment type="subunit">
    <text evidence="1">NDH-1 is composed of 14 different subunits. Subunits NuoB, C, D, E, F, and G constitute the peripheral sector of the complex.</text>
</comment>
<comment type="subcellular location">
    <subcellularLocation>
        <location evidence="1">Cell inner membrane</location>
        <topology evidence="1">Peripheral membrane protein</topology>
        <orientation evidence="1">Cytoplasmic side</orientation>
    </subcellularLocation>
</comment>
<comment type="similarity">
    <text evidence="1">Belongs to the complex I 30 kDa subunit family.</text>
</comment>
<evidence type="ECO:0000255" key="1">
    <source>
        <dbReference type="HAMAP-Rule" id="MF_01357"/>
    </source>
</evidence>
<sequence>MEAITTNGITLRRTVAAAQGDDALRAMGERITGALGPAVTDWSIAHGELTLIVQGSDIVYALTYLRDDPNCAFRCFIDICGVDYPQRARRFDVVYHLLSLRHNMRVRVKVQTDAATPVPSAIPVFPAANWFERETYDLYGILFSGHPDLRRLLTDYGFEGHPLRKDFPLTGFVEVRYDQDEARVVYEPVKLTQEFRNFDFLSPWEGTDYVLPGDEKKSS</sequence>
<protein>
    <recommendedName>
        <fullName evidence="1">NADH-quinone oxidoreductase subunit C</fullName>
        <ecNumber evidence="1">7.1.1.-</ecNumber>
    </recommendedName>
    <alternativeName>
        <fullName evidence="1">NADH dehydrogenase I subunit C</fullName>
    </alternativeName>
    <alternativeName>
        <fullName evidence="1">NDH-1 subunit C</fullName>
    </alternativeName>
</protein>
<accession>B1ZA44</accession>
<reference key="1">
    <citation type="submission" date="2008-04" db="EMBL/GenBank/DDBJ databases">
        <title>Complete sequence of chromosome of Methylobacterium populi BJ001.</title>
        <authorList>
            <consortium name="US DOE Joint Genome Institute"/>
            <person name="Copeland A."/>
            <person name="Lucas S."/>
            <person name="Lapidus A."/>
            <person name="Glavina del Rio T."/>
            <person name="Dalin E."/>
            <person name="Tice H."/>
            <person name="Bruce D."/>
            <person name="Goodwin L."/>
            <person name="Pitluck S."/>
            <person name="Chertkov O."/>
            <person name="Brettin T."/>
            <person name="Detter J.C."/>
            <person name="Han C."/>
            <person name="Kuske C.R."/>
            <person name="Schmutz J."/>
            <person name="Larimer F."/>
            <person name="Land M."/>
            <person name="Hauser L."/>
            <person name="Kyrpides N."/>
            <person name="Mikhailova N."/>
            <person name="Marx C."/>
            <person name="Richardson P."/>
        </authorList>
    </citation>
    <scope>NUCLEOTIDE SEQUENCE [LARGE SCALE GENOMIC DNA]</scope>
    <source>
        <strain>ATCC BAA-705 / NCIMB 13946 / BJ001</strain>
    </source>
</reference>
<feature type="chain" id="PRO_0000358126" description="NADH-quinone oxidoreductase subunit C">
    <location>
        <begin position="1"/>
        <end position="219"/>
    </location>
</feature>
<proteinExistence type="inferred from homology"/>
<organism>
    <name type="scientific">Methylorubrum populi (strain ATCC BAA-705 / NCIMB 13946 / BJ001)</name>
    <name type="common">Methylobacterium populi</name>
    <dbReference type="NCBI Taxonomy" id="441620"/>
    <lineage>
        <taxon>Bacteria</taxon>
        <taxon>Pseudomonadati</taxon>
        <taxon>Pseudomonadota</taxon>
        <taxon>Alphaproteobacteria</taxon>
        <taxon>Hyphomicrobiales</taxon>
        <taxon>Methylobacteriaceae</taxon>
        <taxon>Methylorubrum</taxon>
    </lineage>
</organism>
<gene>
    <name evidence="1" type="primary">nuoC</name>
    <name type="ordered locus">Mpop_1017</name>
</gene>
<name>NUOC_METPB</name>
<keyword id="KW-0997">Cell inner membrane</keyword>
<keyword id="KW-1003">Cell membrane</keyword>
<keyword id="KW-0472">Membrane</keyword>
<keyword id="KW-0520">NAD</keyword>
<keyword id="KW-0874">Quinone</keyword>
<keyword id="KW-1278">Translocase</keyword>
<keyword id="KW-0813">Transport</keyword>
<keyword id="KW-0830">Ubiquinone</keyword>